<name>DGTP_YERPG</name>
<feature type="chain" id="PRO_1000090268" description="Deoxyguanosinetriphosphate triphosphohydrolase">
    <location>
        <begin position="1"/>
        <end position="506"/>
    </location>
</feature>
<feature type="domain" description="HD" evidence="2">
    <location>
        <begin position="66"/>
        <end position="274"/>
    </location>
</feature>
<sequence>MSGIDFKQKISFQRPFSKPSSAEDEYEITRVFESDRGRIVNSAAIRRLQQKTQVFPLERNAAVRSRLTHSLEVQQVGRYIAKEILNRFKQDKKITAYGLDKLLDPFESIVEMACLMHDIGNPPFGHFGESAINDWFTKRMDPNGGSGSEPQSTDQCQVDVLKLCEGETELNILRSKIRHDLSQFEGNAQAIRLVHSLLKLNLTYAQVGCILKYTKPAYWSAPIPASHNYLMKKPGFYLAEENYVKELRRELNMEEFDRFPLTYIMEAADDISYCIADLEDAVEKNIFSVEQLYDHMSQEWGAVTPGDLFDKVVGAAFRQLGREQGRRSSEDQFFMYLRVNTVGKLVPHAAQRFIENLPAVFSGSFNQALLEDSSAACKLLQIFKRVAVKHVFNHPEVEQLELQGYRVISGLLDIYSPLLAMPETAFTQLVADDRHRKYPIETRLFHKLSIKHRLAYAESAERIRNLPSEQYEIYEYYYRARLIQDYISGMTDLYAYDEYRRLMAAE</sequence>
<proteinExistence type="inferred from homology"/>
<comment type="function">
    <text evidence="1">dGTPase preferentially hydrolyzes dGTP over the other canonical NTPs.</text>
</comment>
<comment type="catalytic activity">
    <reaction evidence="1">
        <text>dGTP + H2O = 2'-deoxyguanosine + triphosphate + H(+)</text>
        <dbReference type="Rhea" id="RHEA:15193"/>
        <dbReference type="ChEBI" id="CHEBI:15377"/>
        <dbReference type="ChEBI" id="CHEBI:15378"/>
        <dbReference type="ChEBI" id="CHEBI:17172"/>
        <dbReference type="ChEBI" id="CHEBI:18036"/>
        <dbReference type="ChEBI" id="CHEBI:61429"/>
        <dbReference type="EC" id="3.1.5.1"/>
    </reaction>
</comment>
<comment type="cofactor">
    <cofactor evidence="1">
        <name>Mg(2+)</name>
        <dbReference type="ChEBI" id="CHEBI:18420"/>
    </cofactor>
</comment>
<comment type="subunit">
    <text evidence="1">Homotetramer.</text>
</comment>
<comment type="similarity">
    <text evidence="1">Belongs to the dGTPase family. Type 1 subfamily.</text>
</comment>
<reference key="1">
    <citation type="journal article" date="2010" name="J. Bacteriol.">
        <title>Genome sequence of the deep-rooted Yersinia pestis strain Angola reveals new insights into the evolution and pangenome of the plague bacterium.</title>
        <authorList>
            <person name="Eppinger M."/>
            <person name="Worsham P.L."/>
            <person name="Nikolich M.P."/>
            <person name="Riley D.R."/>
            <person name="Sebastian Y."/>
            <person name="Mou S."/>
            <person name="Achtman M."/>
            <person name="Lindler L.E."/>
            <person name="Ravel J."/>
        </authorList>
    </citation>
    <scope>NUCLEOTIDE SEQUENCE [LARGE SCALE GENOMIC DNA]</scope>
    <source>
        <strain>Angola</strain>
    </source>
</reference>
<organism>
    <name type="scientific">Yersinia pestis bv. Antiqua (strain Angola)</name>
    <dbReference type="NCBI Taxonomy" id="349746"/>
    <lineage>
        <taxon>Bacteria</taxon>
        <taxon>Pseudomonadati</taxon>
        <taxon>Pseudomonadota</taxon>
        <taxon>Gammaproteobacteria</taxon>
        <taxon>Enterobacterales</taxon>
        <taxon>Yersiniaceae</taxon>
        <taxon>Yersinia</taxon>
    </lineage>
</organism>
<keyword id="KW-0378">Hydrolase</keyword>
<keyword id="KW-0460">Magnesium</keyword>
<protein>
    <recommendedName>
        <fullName evidence="1">Deoxyguanosinetriphosphate triphosphohydrolase</fullName>
        <shortName evidence="1">dGTP triphosphohydrolase</shortName>
        <shortName evidence="1">dGTPase</shortName>
        <ecNumber evidence="1">3.1.5.1</ecNumber>
    </recommendedName>
</protein>
<dbReference type="EC" id="3.1.5.1" evidence="1"/>
<dbReference type="EMBL" id="CP000901">
    <property type="protein sequence ID" value="ABX85369.1"/>
    <property type="molecule type" value="Genomic_DNA"/>
</dbReference>
<dbReference type="RefSeq" id="WP_002209369.1">
    <property type="nucleotide sequence ID" value="NZ_CP009935.1"/>
</dbReference>
<dbReference type="SMR" id="A9R1D9"/>
<dbReference type="GeneID" id="57975326"/>
<dbReference type="KEGG" id="ypg:YpAngola_A0988"/>
<dbReference type="PATRIC" id="fig|349746.12.peg.1939"/>
<dbReference type="GO" id="GO:0008832">
    <property type="term" value="F:dGTPase activity"/>
    <property type="evidence" value="ECO:0007669"/>
    <property type="project" value="UniProtKB-UniRule"/>
</dbReference>
<dbReference type="GO" id="GO:0000287">
    <property type="term" value="F:magnesium ion binding"/>
    <property type="evidence" value="ECO:0007669"/>
    <property type="project" value="UniProtKB-UniRule"/>
</dbReference>
<dbReference type="GO" id="GO:0006203">
    <property type="term" value="P:dGTP catabolic process"/>
    <property type="evidence" value="ECO:0007669"/>
    <property type="project" value="InterPro"/>
</dbReference>
<dbReference type="CDD" id="cd00077">
    <property type="entry name" value="HDc"/>
    <property type="match status" value="1"/>
</dbReference>
<dbReference type="FunFam" id="1.10.3210.10:FF:000009">
    <property type="entry name" value="Deoxyguanosinetriphosphate triphosphohydrolase"/>
    <property type="match status" value="1"/>
</dbReference>
<dbReference type="FunFam" id="1.10.3210.10:FF:000010">
    <property type="entry name" value="Deoxyguanosinetriphosphate triphosphohydrolase"/>
    <property type="match status" value="1"/>
</dbReference>
<dbReference type="FunFam" id="1.10.3410.10:FF:000001">
    <property type="entry name" value="Deoxyguanosinetriphosphate triphosphohydrolase"/>
    <property type="match status" value="1"/>
</dbReference>
<dbReference type="Gene3D" id="1.10.3210.10">
    <property type="entry name" value="Hypothetical protein af1432"/>
    <property type="match status" value="2"/>
</dbReference>
<dbReference type="Gene3D" id="1.10.3410.10">
    <property type="entry name" value="putative deoxyguanosinetriphosphate triphosphohydrolase like domain"/>
    <property type="match status" value="1"/>
</dbReference>
<dbReference type="HAMAP" id="MF_00030">
    <property type="entry name" value="dGTPase_type1"/>
    <property type="match status" value="1"/>
</dbReference>
<dbReference type="InterPro" id="IPR023293">
    <property type="entry name" value="dGTP_triP_hydro_central_sf"/>
</dbReference>
<dbReference type="InterPro" id="IPR006261">
    <property type="entry name" value="dGTPase"/>
</dbReference>
<dbReference type="InterPro" id="IPR050135">
    <property type="entry name" value="dGTPase-like"/>
</dbReference>
<dbReference type="InterPro" id="IPR020779">
    <property type="entry name" value="dNTPase_1"/>
</dbReference>
<dbReference type="InterPro" id="IPR003607">
    <property type="entry name" value="HD/PDEase_dom"/>
</dbReference>
<dbReference type="InterPro" id="IPR006674">
    <property type="entry name" value="HD_domain"/>
</dbReference>
<dbReference type="InterPro" id="IPR026875">
    <property type="entry name" value="PHydrolase_assoc_dom"/>
</dbReference>
<dbReference type="NCBIfam" id="TIGR01353">
    <property type="entry name" value="dGTP_triPase"/>
    <property type="match status" value="1"/>
</dbReference>
<dbReference type="NCBIfam" id="NF003429">
    <property type="entry name" value="PRK04926.1"/>
    <property type="match status" value="1"/>
</dbReference>
<dbReference type="PANTHER" id="PTHR11373:SF32">
    <property type="entry name" value="DEOXYGUANOSINETRIPHOSPHATE TRIPHOSPHOHYDROLASE"/>
    <property type="match status" value="1"/>
</dbReference>
<dbReference type="PANTHER" id="PTHR11373">
    <property type="entry name" value="DEOXYNUCLEOSIDE TRIPHOSPHATE TRIPHOSPHOHYDROLASE"/>
    <property type="match status" value="1"/>
</dbReference>
<dbReference type="Pfam" id="PF01966">
    <property type="entry name" value="HD"/>
    <property type="match status" value="1"/>
</dbReference>
<dbReference type="Pfam" id="PF13286">
    <property type="entry name" value="HD_assoc"/>
    <property type="match status" value="1"/>
</dbReference>
<dbReference type="SMART" id="SM00471">
    <property type="entry name" value="HDc"/>
    <property type="match status" value="1"/>
</dbReference>
<dbReference type="SUPFAM" id="SSF109604">
    <property type="entry name" value="HD-domain/PDEase-like"/>
    <property type="match status" value="1"/>
</dbReference>
<dbReference type="PROSITE" id="PS51831">
    <property type="entry name" value="HD"/>
    <property type="match status" value="1"/>
</dbReference>
<accession>A9R1D9</accession>
<evidence type="ECO:0000255" key="1">
    <source>
        <dbReference type="HAMAP-Rule" id="MF_00030"/>
    </source>
</evidence>
<evidence type="ECO:0000255" key="2">
    <source>
        <dbReference type="PROSITE-ProRule" id="PRU01175"/>
    </source>
</evidence>
<gene>
    <name evidence="1" type="primary">dgt</name>
    <name type="ordered locus">YpAngola_A0988</name>
</gene>